<comment type="similarity">
    <text evidence="1">Belongs to the universal ribosomal protein uS9 family.</text>
</comment>
<reference key="1">
    <citation type="journal article" date="2006" name="Proc. Natl. Acad. Sci. U.S.A.">
        <title>Burkholderia xenovorans LB400 harbors a multi-replicon, 9.73-Mbp genome shaped for versatility.</title>
        <authorList>
            <person name="Chain P.S.G."/>
            <person name="Denef V.J."/>
            <person name="Konstantinidis K.T."/>
            <person name="Vergez L.M."/>
            <person name="Agullo L."/>
            <person name="Reyes V.L."/>
            <person name="Hauser L."/>
            <person name="Cordova M."/>
            <person name="Gomez L."/>
            <person name="Gonzalez M."/>
            <person name="Land M."/>
            <person name="Lao V."/>
            <person name="Larimer F."/>
            <person name="LiPuma J.J."/>
            <person name="Mahenthiralingam E."/>
            <person name="Malfatti S.A."/>
            <person name="Marx C.J."/>
            <person name="Parnell J.J."/>
            <person name="Ramette A."/>
            <person name="Richardson P."/>
            <person name="Seeger M."/>
            <person name="Smith D."/>
            <person name="Spilker T."/>
            <person name="Sul W.J."/>
            <person name="Tsoi T.V."/>
            <person name="Ulrich L.E."/>
            <person name="Zhulin I.B."/>
            <person name="Tiedje J.M."/>
        </authorList>
    </citation>
    <scope>NUCLEOTIDE SEQUENCE [LARGE SCALE GENOMIC DNA]</scope>
    <source>
        <strain>LB400</strain>
    </source>
</reference>
<feature type="chain" id="PRO_1000051194" description="Small ribosomal subunit protein uS9">
    <location>
        <begin position="1"/>
        <end position="130"/>
    </location>
</feature>
<name>RS9_PARXL</name>
<gene>
    <name evidence="1" type="primary">rpsI</name>
    <name type="ordered locus">Bxeno_A3788</name>
    <name type="ORF">Bxe_A0608</name>
</gene>
<keyword id="KW-1185">Reference proteome</keyword>
<keyword id="KW-0687">Ribonucleoprotein</keyword>
<keyword id="KW-0689">Ribosomal protein</keyword>
<protein>
    <recommendedName>
        <fullName evidence="1">Small ribosomal subunit protein uS9</fullName>
    </recommendedName>
    <alternativeName>
        <fullName evidence="2">30S ribosomal protein S9</fullName>
    </alternativeName>
</protein>
<sequence>MIGNWNYGTGRRKSAVARVFIKAGKGDIVVNGKPIADYFSRETSLMIVRQPLELTNHGVTFDIKVNVTGGGETGQAGAVRHGITRALMDYDATLKPELSKAGFVTRDAREVERKKVGFHKARRRKQFSKR</sequence>
<dbReference type="EMBL" id="CP000270">
    <property type="protein sequence ID" value="ABE32326.1"/>
    <property type="molecule type" value="Genomic_DNA"/>
</dbReference>
<dbReference type="RefSeq" id="WP_011489810.1">
    <property type="nucleotide sequence ID" value="NZ_CP008760.1"/>
</dbReference>
<dbReference type="SMR" id="Q13UB3"/>
<dbReference type="STRING" id="266265.Bxe_A0608"/>
<dbReference type="GeneID" id="97308796"/>
<dbReference type="KEGG" id="bxb:DR64_2776"/>
<dbReference type="KEGG" id="bxe:Bxe_A0608"/>
<dbReference type="eggNOG" id="COG0103">
    <property type="taxonomic scope" value="Bacteria"/>
</dbReference>
<dbReference type="OrthoDB" id="9803965at2"/>
<dbReference type="Proteomes" id="UP000001817">
    <property type="component" value="Chromosome 1"/>
</dbReference>
<dbReference type="GO" id="GO:0022627">
    <property type="term" value="C:cytosolic small ribosomal subunit"/>
    <property type="evidence" value="ECO:0007669"/>
    <property type="project" value="TreeGrafter"/>
</dbReference>
<dbReference type="GO" id="GO:0003723">
    <property type="term" value="F:RNA binding"/>
    <property type="evidence" value="ECO:0007669"/>
    <property type="project" value="TreeGrafter"/>
</dbReference>
<dbReference type="GO" id="GO:0003735">
    <property type="term" value="F:structural constituent of ribosome"/>
    <property type="evidence" value="ECO:0007669"/>
    <property type="project" value="InterPro"/>
</dbReference>
<dbReference type="GO" id="GO:0006412">
    <property type="term" value="P:translation"/>
    <property type="evidence" value="ECO:0007669"/>
    <property type="project" value="UniProtKB-UniRule"/>
</dbReference>
<dbReference type="FunFam" id="3.30.230.10:FF:000001">
    <property type="entry name" value="30S ribosomal protein S9"/>
    <property type="match status" value="1"/>
</dbReference>
<dbReference type="Gene3D" id="3.30.230.10">
    <property type="match status" value="1"/>
</dbReference>
<dbReference type="HAMAP" id="MF_00532_B">
    <property type="entry name" value="Ribosomal_uS9_B"/>
    <property type="match status" value="1"/>
</dbReference>
<dbReference type="InterPro" id="IPR020568">
    <property type="entry name" value="Ribosomal_Su5_D2-typ_SF"/>
</dbReference>
<dbReference type="InterPro" id="IPR000754">
    <property type="entry name" value="Ribosomal_uS9"/>
</dbReference>
<dbReference type="InterPro" id="IPR023035">
    <property type="entry name" value="Ribosomal_uS9_bac/plastid"/>
</dbReference>
<dbReference type="InterPro" id="IPR020574">
    <property type="entry name" value="Ribosomal_uS9_CS"/>
</dbReference>
<dbReference type="InterPro" id="IPR014721">
    <property type="entry name" value="Ribsml_uS5_D2-typ_fold_subgr"/>
</dbReference>
<dbReference type="NCBIfam" id="NF001099">
    <property type="entry name" value="PRK00132.1"/>
    <property type="match status" value="1"/>
</dbReference>
<dbReference type="PANTHER" id="PTHR21569">
    <property type="entry name" value="RIBOSOMAL PROTEIN S9"/>
    <property type="match status" value="1"/>
</dbReference>
<dbReference type="PANTHER" id="PTHR21569:SF1">
    <property type="entry name" value="SMALL RIBOSOMAL SUBUNIT PROTEIN US9M"/>
    <property type="match status" value="1"/>
</dbReference>
<dbReference type="Pfam" id="PF00380">
    <property type="entry name" value="Ribosomal_S9"/>
    <property type="match status" value="1"/>
</dbReference>
<dbReference type="SUPFAM" id="SSF54211">
    <property type="entry name" value="Ribosomal protein S5 domain 2-like"/>
    <property type="match status" value="1"/>
</dbReference>
<dbReference type="PROSITE" id="PS00360">
    <property type="entry name" value="RIBOSOMAL_S9"/>
    <property type="match status" value="1"/>
</dbReference>
<evidence type="ECO:0000255" key="1">
    <source>
        <dbReference type="HAMAP-Rule" id="MF_00532"/>
    </source>
</evidence>
<evidence type="ECO:0000305" key="2"/>
<organism>
    <name type="scientific">Paraburkholderia xenovorans (strain LB400)</name>
    <dbReference type="NCBI Taxonomy" id="266265"/>
    <lineage>
        <taxon>Bacteria</taxon>
        <taxon>Pseudomonadati</taxon>
        <taxon>Pseudomonadota</taxon>
        <taxon>Betaproteobacteria</taxon>
        <taxon>Burkholderiales</taxon>
        <taxon>Burkholderiaceae</taxon>
        <taxon>Paraburkholderia</taxon>
    </lineage>
</organism>
<accession>Q13UB3</accession>
<proteinExistence type="inferred from homology"/>